<comment type="function">
    <text evidence="1">Catalyzes the oxidation of 5,10-methylenetetrahydrofolate to 5,10-methenyltetrahydrofolate and then the hydrolysis of 5,10-methenyltetrahydrofolate to 10-formyltetrahydrofolate.</text>
</comment>
<comment type="catalytic activity">
    <reaction evidence="1">
        <text>(6R)-5,10-methylene-5,6,7,8-tetrahydrofolate + NADP(+) = (6R)-5,10-methenyltetrahydrofolate + NADPH</text>
        <dbReference type="Rhea" id="RHEA:22812"/>
        <dbReference type="ChEBI" id="CHEBI:15636"/>
        <dbReference type="ChEBI" id="CHEBI:57455"/>
        <dbReference type="ChEBI" id="CHEBI:57783"/>
        <dbReference type="ChEBI" id="CHEBI:58349"/>
        <dbReference type="EC" id="1.5.1.5"/>
    </reaction>
</comment>
<comment type="catalytic activity">
    <reaction evidence="1">
        <text>(6R)-5,10-methenyltetrahydrofolate + H2O = (6R)-10-formyltetrahydrofolate + H(+)</text>
        <dbReference type="Rhea" id="RHEA:23700"/>
        <dbReference type="ChEBI" id="CHEBI:15377"/>
        <dbReference type="ChEBI" id="CHEBI:15378"/>
        <dbReference type="ChEBI" id="CHEBI:57455"/>
        <dbReference type="ChEBI" id="CHEBI:195366"/>
        <dbReference type="EC" id="3.5.4.9"/>
    </reaction>
</comment>
<comment type="pathway">
    <text evidence="1">One-carbon metabolism; tetrahydrofolate interconversion.</text>
</comment>
<comment type="subunit">
    <text evidence="1">Homodimer.</text>
</comment>
<comment type="similarity">
    <text evidence="1">Belongs to the tetrahydrofolate dehydrogenase/cyclohydrolase family.</text>
</comment>
<protein>
    <recommendedName>
        <fullName evidence="1">Bifunctional protein FolD</fullName>
    </recommendedName>
    <domain>
        <recommendedName>
            <fullName evidence="1">Methylenetetrahydrofolate dehydrogenase</fullName>
            <ecNumber evidence="1">1.5.1.5</ecNumber>
        </recommendedName>
    </domain>
    <domain>
        <recommendedName>
            <fullName evidence="1">Methenyltetrahydrofolate cyclohydrolase</fullName>
            <ecNumber evidence="1">3.5.4.9</ecNumber>
        </recommendedName>
    </domain>
</protein>
<name>FOLD_PARPJ</name>
<gene>
    <name evidence="1" type="primary">folD</name>
    <name type="ordered locus">Bphyt_2595</name>
</gene>
<feature type="chain" id="PRO_1000147450" description="Bifunctional protein FolD">
    <location>
        <begin position="1"/>
        <end position="286"/>
    </location>
</feature>
<feature type="binding site" evidence="1">
    <location>
        <begin position="165"/>
        <end position="167"/>
    </location>
    <ligand>
        <name>NADP(+)</name>
        <dbReference type="ChEBI" id="CHEBI:58349"/>
    </ligand>
</feature>
<feature type="binding site" evidence="1">
    <location>
        <position position="190"/>
    </location>
    <ligand>
        <name>NADP(+)</name>
        <dbReference type="ChEBI" id="CHEBI:58349"/>
    </ligand>
</feature>
<dbReference type="EC" id="1.5.1.5" evidence="1"/>
<dbReference type="EC" id="3.5.4.9" evidence="1"/>
<dbReference type="EMBL" id="CP001052">
    <property type="protein sequence ID" value="ACD16990.1"/>
    <property type="molecule type" value="Genomic_DNA"/>
</dbReference>
<dbReference type="RefSeq" id="WP_012433582.1">
    <property type="nucleotide sequence ID" value="NC_010681.1"/>
</dbReference>
<dbReference type="SMR" id="B2T5N8"/>
<dbReference type="STRING" id="398527.Bphyt_2595"/>
<dbReference type="KEGG" id="bpy:Bphyt_2595"/>
<dbReference type="eggNOG" id="COG0190">
    <property type="taxonomic scope" value="Bacteria"/>
</dbReference>
<dbReference type="HOGENOM" id="CLU_034045_2_1_4"/>
<dbReference type="OrthoDB" id="9803580at2"/>
<dbReference type="UniPathway" id="UPA00193"/>
<dbReference type="Proteomes" id="UP000001739">
    <property type="component" value="Chromosome 1"/>
</dbReference>
<dbReference type="GO" id="GO:0005829">
    <property type="term" value="C:cytosol"/>
    <property type="evidence" value="ECO:0007669"/>
    <property type="project" value="TreeGrafter"/>
</dbReference>
<dbReference type="GO" id="GO:0004477">
    <property type="term" value="F:methenyltetrahydrofolate cyclohydrolase activity"/>
    <property type="evidence" value="ECO:0007669"/>
    <property type="project" value="UniProtKB-UniRule"/>
</dbReference>
<dbReference type="GO" id="GO:0004488">
    <property type="term" value="F:methylenetetrahydrofolate dehydrogenase (NADP+) activity"/>
    <property type="evidence" value="ECO:0007669"/>
    <property type="project" value="UniProtKB-UniRule"/>
</dbReference>
<dbReference type="GO" id="GO:0000105">
    <property type="term" value="P:L-histidine biosynthetic process"/>
    <property type="evidence" value="ECO:0007669"/>
    <property type="project" value="UniProtKB-KW"/>
</dbReference>
<dbReference type="GO" id="GO:0009086">
    <property type="term" value="P:methionine biosynthetic process"/>
    <property type="evidence" value="ECO:0007669"/>
    <property type="project" value="UniProtKB-KW"/>
</dbReference>
<dbReference type="GO" id="GO:0006164">
    <property type="term" value="P:purine nucleotide biosynthetic process"/>
    <property type="evidence" value="ECO:0007669"/>
    <property type="project" value="UniProtKB-KW"/>
</dbReference>
<dbReference type="GO" id="GO:0035999">
    <property type="term" value="P:tetrahydrofolate interconversion"/>
    <property type="evidence" value="ECO:0007669"/>
    <property type="project" value="UniProtKB-UniRule"/>
</dbReference>
<dbReference type="CDD" id="cd01080">
    <property type="entry name" value="NAD_bind_m-THF_DH_Cyclohyd"/>
    <property type="match status" value="1"/>
</dbReference>
<dbReference type="FunFam" id="3.40.50.720:FF:000094">
    <property type="entry name" value="Bifunctional protein FolD"/>
    <property type="match status" value="1"/>
</dbReference>
<dbReference type="FunFam" id="3.40.50.10860:FF:000005">
    <property type="entry name" value="C-1-tetrahydrofolate synthase, cytoplasmic, putative"/>
    <property type="match status" value="1"/>
</dbReference>
<dbReference type="Gene3D" id="3.40.50.10860">
    <property type="entry name" value="Leucine Dehydrogenase, chain A, domain 1"/>
    <property type="match status" value="1"/>
</dbReference>
<dbReference type="Gene3D" id="3.40.50.720">
    <property type="entry name" value="NAD(P)-binding Rossmann-like Domain"/>
    <property type="match status" value="1"/>
</dbReference>
<dbReference type="HAMAP" id="MF_01576">
    <property type="entry name" value="THF_DHG_CYH"/>
    <property type="match status" value="1"/>
</dbReference>
<dbReference type="InterPro" id="IPR046346">
    <property type="entry name" value="Aminoacid_DH-like_N_sf"/>
</dbReference>
<dbReference type="InterPro" id="IPR036291">
    <property type="entry name" value="NAD(P)-bd_dom_sf"/>
</dbReference>
<dbReference type="InterPro" id="IPR000672">
    <property type="entry name" value="THF_DH/CycHdrlase"/>
</dbReference>
<dbReference type="InterPro" id="IPR020630">
    <property type="entry name" value="THF_DH/CycHdrlase_cat_dom"/>
</dbReference>
<dbReference type="InterPro" id="IPR020867">
    <property type="entry name" value="THF_DH/CycHdrlase_CS"/>
</dbReference>
<dbReference type="InterPro" id="IPR020631">
    <property type="entry name" value="THF_DH/CycHdrlase_NAD-bd_dom"/>
</dbReference>
<dbReference type="NCBIfam" id="NF008058">
    <property type="entry name" value="PRK10792.1"/>
    <property type="match status" value="1"/>
</dbReference>
<dbReference type="NCBIfam" id="NF010783">
    <property type="entry name" value="PRK14186.1"/>
    <property type="match status" value="1"/>
</dbReference>
<dbReference type="NCBIfam" id="NF010786">
    <property type="entry name" value="PRK14189.1"/>
    <property type="match status" value="1"/>
</dbReference>
<dbReference type="PANTHER" id="PTHR48099:SF5">
    <property type="entry name" value="C-1-TETRAHYDROFOLATE SYNTHASE, CYTOPLASMIC"/>
    <property type="match status" value="1"/>
</dbReference>
<dbReference type="PANTHER" id="PTHR48099">
    <property type="entry name" value="C-1-TETRAHYDROFOLATE SYNTHASE, CYTOPLASMIC-RELATED"/>
    <property type="match status" value="1"/>
</dbReference>
<dbReference type="Pfam" id="PF00763">
    <property type="entry name" value="THF_DHG_CYH"/>
    <property type="match status" value="1"/>
</dbReference>
<dbReference type="Pfam" id="PF02882">
    <property type="entry name" value="THF_DHG_CYH_C"/>
    <property type="match status" value="1"/>
</dbReference>
<dbReference type="PRINTS" id="PR00085">
    <property type="entry name" value="THFDHDRGNASE"/>
</dbReference>
<dbReference type="SUPFAM" id="SSF53223">
    <property type="entry name" value="Aminoacid dehydrogenase-like, N-terminal domain"/>
    <property type="match status" value="1"/>
</dbReference>
<dbReference type="SUPFAM" id="SSF51735">
    <property type="entry name" value="NAD(P)-binding Rossmann-fold domains"/>
    <property type="match status" value="1"/>
</dbReference>
<dbReference type="PROSITE" id="PS00766">
    <property type="entry name" value="THF_DHG_CYH_1"/>
    <property type="match status" value="1"/>
</dbReference>
<dbReference type="PROSITE" id="PS00767">
    <property type="entry name" value="THF_DHG_CYH_2"/>
    <property type="match status" value="1"/>
</dbReference>
<reference key="1">
    <citation type="journal article" date="2011" name="J. Bacteriol.">
        <title>Complete genome sequence of the plant growth-promoting endophyte Burkholderia phytofirmans strain PsJN.</title>
        <authorList>
            <person name="Weilharter A."/>
            <person name="Mitter B."/>
            <person name="Shin M.V."/>
            <person name="Chain P.S."/>
            <person name="Nowak J."/>
            <person name="Sessitsch A."/>
        </authorList>
    </citation>
    <scope>NUCLEOTIDE SEQUENCE [LARGE SCALE GENOMIC DNA]</scope>
    <source>
        <strain>DSM 17436 / LMG 22146 / PsJN</strain>
    </source>
</reference>
<accession>B2T5N8</accession>
<sequence>MTAKLIDGLALSKTLRADVAARAAALTARGHQPGLAVVLVGDNPASEVYVRNKVKACHDNGLGSSFDRYPADLPEAELLARIDELNRDPRIHGILVQLPLPPHIDSHKVIEAIAPEKDVDGFHVANAGALMTGRPLFRPCTPYGVMKMLAAYEIPLQGANAVVIGRSNIVGKPMALLLLEAGATVTICHSKTRDLAAHTRNADVVVAATGLRNILTAEMVKPGAAVIDVGMNRDDAGKLCGDVDFAGVKEVAGYITPVPGGVGPMTITMLLVNTIEAAEREAAANA</sequence>
<proteinExistence type="inferred from homology"/>
<evidence type="ECO:0000255" key="1">
    <source>
        <dbReference type="HAMAP-Rule" id="MF_01576"/>
    </source>
</evidence>
<keyword id="KW-0028">Amino-acid biosynthesis</keyword>
<keyword id="KW-0368">Histidine biosynthesis</keyword>
<keyword id="KW-0378">Hydrolase</keyword>
<keyword id="KW-0486">Methionine biosynthesis</keyword>
<keyword id="KW-0511">Multifunctional enzyme</keyword>
<keyword id="KW-0521">NADP</keyword>
<keyword id="KW-0554">One-carbon metabolism</keyword>
<keyword id="KW-0560">Oxidoreductase</keyword>
<keyword id="KW-0658">Purine biosynthesis</keyword>
<organism>
    <name type="scientific">Paraburkholderia phytofirmans (strain DSM 17436 / LMG 22146 / PsJN)</name>
    <name type="common">Burkholderia phytofirmans</name>
    <dbReference type="NCBI Taxonomy" id="398527"/>
    <lineage>
        <taxon>Bacteria</taxon>
        <taxon>Pseudomonadati</taxon>
        <taxon>Pseudomonadota</taxon>
        <taxon>Betaproteobacteria</taxon>
        <taxon>Burkholderiales</taxon>
        <taxon>Burkholderiaceae</taxon>
        <taxon>Paraburkholderia</taxon>
    </lineage>
</organism>